<proteinExistence type="inferred from homology"/>
<dbReference type="EC" id="2.7.7.-" evidence="1"/>
<dbReference type="EC" id="2.7.7.108" evidence="1"/>
<dbReference type="EMBL" id="CT573326">
    <property type="protein sequence ID" value="CAK13329.1"/>
    <property type="molecule type" value="Genomic_DNA"/>
</dbReference>
<dbReference type="RefSeq" id="WP_011531789.1">
    <property type="nucleotide sequence ID" value="NC_008027.1"/>
</dbReference>
<dbReference type="SMR" id="Q1IG73"/>
<dbReference type="STRING" id="384676.PSEEN0369"/>
<dbReference type="GeneID" id="32803710"/>
<dbReference type="KEGG" id="pen:PSEEN0369"/>
<dbReference type="eggNOG" id="COG0397">
    <property type="taxonomic scope" value="Bacteria"/>
</dbReference>
<dbReference type="HOGENOM" id="CLU_010245_4_0_6"/>
<dbReference type="OrthoDB" id="9776281at2"/>
<dbReference type="Proteomes" id="UP000000658">
    <property type="component" value="Chromosome"/>
</dbReference>
<dbReference type="GO" id="GO:0070733">
    <property type="term" value="F:AMPylase activity"/>
    <property type="evidence" value="ECO:0007669"/>
    <property type="project" value="RHEA"/>
</dbReference>
<dbReference type="GO" id="GO:0005524">
    <property type="term" value="F:ATP binding"/>
    <property type="evidence" value="ECO:0007669"/>
    <property type="project" value="UniProtKB-UniRule"/>
</dbReference>
<dbReference type="GO" id="GO:0000287">
    <property type="term" value="F:magnesium ion binding"/>
    <property type="evidence" value="ECO:0007669"/>
    <property type="project" value="UniProtKB-UniRule"/>
</dbReference>
<dbReference type="HAMAP" id="MF_00692">
    <property type="entry name" value="YdiU_SelO"/>
    <property type="match status" value="1"/>
</dbReference>
<dbReference type="InterPro" id="IPR003846">
    <property type="entry name" value="SelO"/>
</dbReference>
<dbReference type="NCBIfam" id="NF000658">
    <property type="entry name" value="PRK00029.1"/>
    <property type="match status" value="1"/>
</dbReference>
<dbReference type="NCBIfam" id="NF045949">
    <property type="entry name" value="PrtAdtaseSelOPseudom"/>
    <property type="match status" value="1"/>
</dbReference>
<dbReference type="PANTHER" id="PTHR32057">
    <property type="entry name" value="PROTEIN ADENYLYLTRANSFERASE SELO, MITOCHONDRIAL"/>
    <property type="match status" value="1"/>
</dbReference>
<dbReference type="PANTHER" id="PTHR32057:SF14">
    <property type="entry name" value="PROTEIN ADENYLYLTRANSFERASE SELO, MITOCHONDRIAL"/>
    <property type="match status" value="1"/>
</dbReference>
<dbReference type="Pfam" id="PF02696">
    <property type="entry name" value="SelO"/>
    <property type="match status" value="1"/>
</dbReference>
<reference key="1">
    <citation type="journal article" date="2006" name="Nat. Biotechnol.">
        <title>Complete genome sequence of the entomopathogenic and metabolically versatile soil bacterium Pseudomonas entomophila.</title>
        <authorList>
            <person name="Vodovar N."/>
            <person name="Vallenet D."/>
            <person name="Cruveiller S."/>
            <person name="Rouy Z."/>
            <person name="Barbe V."/>
            <person name="Acosta C."/>
            <person name="Cattolico L."/>
            <person name="Jubin C."/>
            <person name="Lajus A."/>
            <person name="Segurens B."/>
            <person name="Vacherie B."/>
            <person name="Wincker P."/>
            <person name="Weissenbach J."/>
            <person name="Lemaitre B."/>
            <person name="Medigue C."/>
            <person name="Boccard F."/>
        </authorList>
    </citation>
    <scope>NUCLEOTIDE SEQUENCE [LARGE SCALE GENOMIC DNA]</scope>
    <source>
        <strain>L48</strain>
    </source>
</reference>
<protein>
    <recommendedName>
        <fullName evidence="1">Protein nucleotidyltransferase YdiU</fullName>
        <ecNumber evidence="1">2.7.7.-</ecNumber>
    </recommendedName>
    <alternativeName>
        <fullName evidence="1">Protein adenylyltransferase YdiU</fullName>
        <ecNumber evidence="1">2.7.7.108</ecNumber>
    </alternativeName>
    <alternativeName>
        <fullName evidence="1">Protein uridylyltransferase YdiU</fullName>
        <ecNumber evidence="1">2.7.7.-</ecNumber>
    </alternativeName>
</protein>
<gene>
    <name evidence="1" type="primary">ydiU</name>
    <name evidence="1" type="synonym">selO</name>
    <name type="ordered locus">PSEEN0369</name>
</gene>
<accession>Q1IG73</accession>
<name>SELO_PSEE4</name>
<feature type="chain" id="PRO_1000045252" description="Protein nucleotidyltransferase YdiU">
    <location>
        <begin position="1"/>
        <end position="486"/>
    </location>
</feature>
<feature type="active site" description="Proton acceptor" evidence="1">
    <location>
        <position position="252"/>
    </location>
</feature>
<feature type="binding site" evidence="1">
    <location>
        <position position="90"/>
    </location>
    <ligand>
        <name>ATP</name>
        <dbReference type="ChEBI" id="CHEBI:30616"/>
    </ligand>
</feature>
<feature type="binding site" evidence="1">
    <location>
        <position position="92"/>
    </location>
    <ligand>
        <name>ATP</name>
        <dbReference type="ChEBI" id="CHEBI:30616"/>
    </ligand>
</feature>
<feature type="binding site" evidence="1">
    <location>
        <position position="93"/>
    </location>
    <ligand>
        <name>ATP</name>
        <dbReference type="ChEBI" id="CHEBI:30616"/>
    </ligand>
</feature>
<feature type="binding site" evidence="1">
    <location>
        <position position="113"/>
    </location>
    <ligand>
        <name>ATP</name>
        <dbReference type="ChEBI" id="CHEBI:30616"/>
    </ligand>
</feature>
<feature type="binding site" evidence="1">
    <location>
        <position position="125"/>
    </location>
    <ligand>
        <name>ATP</name>
        <dbReference type="ChEBI" id="CHEBI:30616"/>
    </ligand>
</feature>
<feature type="binding site" evidence="1">
    <location>
        <position position="126"/>
    </location>
    <ligand>
        <name>ATP</name>
        <dbReference type="ChEBI" id="CHEBI:30616"/>
    </ligand>
</feature>
<feature type="binding site" evidence="1">
    <location>
        <position position="176"/>
    </location>
    <ligand>
        <name>ATP</name>
        <dbReference type="ChEBI" id="CHEBI:30616"/>
    </ligand>
</feature>
<feature type="binding site" evidence="1">
    <location>
        <position position="183"/>
    </location>
    <ligand>
        <name>ATP</name>
        <dbReference type="ChEBI" id="CHEBI:30616"/>
    </ligand>
</feature>
<feature type="binding site" evidence="1">
    <location>
        <position position="253"/>
    </location>
    <ligand>
        <name>Mg(2+)</name>
        <dbReference type="ChEBI" id="CHEBI:18420"/>
    </ligand>
</feature>
<feature type="binding site" evidence="1">
    <location>
        <position position="262"/>
    </location>
    <ligand>
        <name>ATP</name>
        <dbReference type="ChEBI" id="CHEBI:30616"/>
    </ligand>
</feature>
<feature type="binding site" evidence="1">
    <location>
        <position position="262"/>
    </location>
    <ligand>
        <name>Mg(2+)</name>
        <dbReference type="ChEBI" id="CHEBI:18420"/>
    </ligand>
</feature>
<comment type="function">
    <text evidence="1">Nucleotidyltransferase involved in the post-translational modification of proteins. It can catalyze the addition of adenosine monophosphate (AMP) or uridine monophosphate (UMP) to a protein, resulting in modifications known as AMPylation and UMPylation.</text>
</comment>
<comment type="catalytic activity">
    <reaction evidence="1">
        <text>L-seryl-[protein] + ATP = 3-O-(5'-adenylyl)-L-seryl-[protein] + diphosphate</text>
        <dbReference type="Rhea" id="RHEA:58120"/>
        <dbReference type="Rhea" id="RHEA-COMP:9863"/>
        <dbReference type="Rhea" id="RHEA-COMP:15073"/>
        <dbReference type="ChEBI" id="CHEBI:29999"/>
        <dbReference type="ChEBI" id="CHEBI:30616"/>
        <dbReference type="ChEBI" id="CHEBI:33019"/>
        <dbReference type="ChEBI" id="CHEBI:142516"/>
        <dbReference type="EC" id="2.7.7.108"/>
    </reaction>
</comment>
<comment type="catalytic activity">
    <reaction evidence="1">
        <text>L-threonyl-[protein] + ATP = 3-O-(5'-adenylyl)-L-threonyl-[protein] + diphosphate</text>
        <dbReference type="Rhea" id="RHEA:54292"/>
        <dbReference type="Rhea" id="RHEA-COMP:11060"/>
        <dbReference type="Rhea" id="RHEA-COMP:13847"/>
        <dbReference type="ChEBI" id="CHEBI:30013"/>
        <dbReference type="ChEBI" id="CHEBI:30616"/>
        <dbReference type="ChEBI" id="CHEBI:33019"/>
        <dbReference type="ChEBI" id="CHEBI:138113"/>
        <dbReference type="EC" id="2.7.7.108"/>
    </reaction>
</comment>
<comment type="catalytic activity">
    <reaction evidence="1">
        <text>L-tyrosyl-[protein] + ATP = O-(5'-adenylyl)-L-tyrosyl-[protein] + diphosphate</text>
        <dbReference type="Rhea" id="RHEA:54288"/>
        <dbReference type="Rhea" id="RHEA-COMP:10136"/>
        <dbReference type="Rhea" id="RHEA-COMP:13846"/>
        <dbReference type="ChEBI" id="CHEBI:30616"/>
        <dbReference type="ChEBI" id="CHEBI:33019"/>
        <dbReference type="ChEBI" id="CHEBI:46858"/>
        <dbReference type="ChEBI" id="CHEBI:83624"/>
        <dbReference type="EC" id="2.7.7.108"/>
    </reaction>
</comment>
<comment type="catalytic activity">
    <reaction evidence="1">
        <text>L-histidyl-[protein] + UTP = N(tele)-(5'-uridylyl)-L-histidyl-[protein] + diphosphate</text>
        <dbReference type="Rhea" id="RHEA:83891"/>
        <dbReference type="Rhea" id="RHEA-COMP:9745"/>
        <dbReference type="Rhea" id="RHEA-COMP:20239"/>
        <dbReference type="ChEBI" id="CHEBI:29979"/>
        <dbReference type="ChEBI" id="CHEBI:33019"/>
        <dbReference type="ChEBI" id="CHEBI:46398"/>
        <dbReference type="ChEBI" id="CHEBI:233474"/>
    </reaction>
</comment>
<comment type="catalytic activity">
    <reaction evidence="1">
        <text>L-seryl-[protein] + UTP = O-(5'-uridylyl)-L-seryl-[protein] + diphosphate</text>
        <dbReference type="Rhea" id="RHEA:64604"/>
        <dbReference type="Rhea" id="RHEA-COMP:9863"/>
        <dbReference type="Rhea" id="RHEA-COMP:16635"/>
        <dbReference type="ChEBI" id="CHEBI:29999"/>
        <dbReference type="ChEBI" id="CHEBI:33019"/>
        <dbReference type="ChEBI" id="CHEBI:46398"/>
        <dbReference type="ChEBI" id="CHEBI:156051"/>
    </reaction>
</comment>
<comment type="catalytic activity">
    <reaction evidence="1">
        <text>L-tyrosyl-[protein] + UTP = O-(5'-uridylyl)-L-tyrosyl-[protein] + diphosphate</text>
        <dbReference type="Rhea" id="RHEA:83887"/>
        <dbReference type="Rhea" id="RHEA-COMP:10136"/>
        <dbReference type="Rhea" id="RHEA-COMP:20238"/>
        <dbReference type="ChEBI" id="CHEBI:33019"/>
        <dbReference type="ChEBI" id="CHEBI:46398"/>
        <dbReference type="ChEBI" id="CHEBI:46858"/>
        <dbReference type="ChEBI" id="CHEBI:90602"/>
    </reaction>
</comment>
<comment type="cofactor">
    <cofactor evidence="1">
        <name>Mg(2+)</name>
        <dbReference type="ChEBI" id="CHEBI:18420"/>
    </cofactor>
    <cofactor evidence="1">
        <name>Mn(2+)</name>
        <dbReference type="ChEBI" id="CHEBI:29035"/>
    </cofactor>
</comment>
<comment type="similarity">
    <text evidence="1">Belongs to the SELO family.</text>
</comment>
<sequence length="486" mass="55036">MKSLDQLVFDNRFARLGDAFSTQVLPDPIADPRLVVASEAAMALLDLDPAQADLPVFAELFSGHKLWEEADPRAMVYSGHQFGSYNPRLGDGRGLLLGEVVNDAGEHWDLHLKGAGQTPYSRMGDGRAVLRSSIREFLASEALHALGIPSSRALCVIGSSATVWRETRETAAMLLRLAHSHVRFGHFEYFYYTQQPEQQRLLIDHVLEQHYPECREAEQPYLAMFRTIVERNAELIARWQAYGFCHGVMNTDNMSILGITFDFGPYAFLDDFDANFICNHSDDRGRYSYANQVPIAHWNLSALAQALTTVIEVEPLKEALGLFLPLYQAHYLDLMRRRLGLTTAEDDDMALVERLLQRMQSGGVDYTLFFRKLGERPVAEALKVVRDDFVDLAGFDAWGVEYLARCEREPGNAEGRRERMQAVNPLYVLRNYLAQKAIEAAEAGDYSEVRRLHQVLSRPFEEQPGMQAYAERPPEWGKHLEISCSS</sequence>
<evidence type="ECO:0000255" key="1">
    <source>
        <dbReference type="HAMAP-Rule" id="MF_00692"/>
    </source>
</evidence>
<keyword id="KW-0067">ATP-binding</keyword>
<keyword id="KW-0460">Magnesium</keyword>
<keyword id="KW-0464">Manganese</keyword>
<keyword id="KW-0479">Metal-binding</keyword>
<keyword id="KW-0547">Nucleotide-binding</keyword>
<keyword id="KW-0548">Nucleotidyltransferase</keyword>
<keyword id="KW-0808">Transferase</keyword>
<organism>
    <name type="scientific">Pseudomonas entomophila (strain L48)</name>
    <dbReference type="NCBI Taxonomy" id="384676"/>
    <lineage>
        <taxon>Bacteria</taxon>
        <taxon>Pseudomonadati</taxon>
        <taxon>Pseudomonadota</taxon>
        <taxon>Gammaproteobacteria</taxon>
        <taxon>Pseudomonadales</taxon>
        <taxon>Pseudomonadaceae</taxon>
        <taxon>Pseudomonas</taxon>
    </lineage>
</organism>